<comment type="function">
    <text evidence="1">Catalyzes the formation of sulfite from adenosine 5'-phosphosulfate (APS) using thioredoxin as an electron donor.</text>
</comment>
<comment type="catalytic activity">
    <reaction evidence="1">
        <text>[thioredoxin]-disulfide + sulfite + AMP + 2 H(+) = adenosine 5'-phosphosulfate + [thioredoxin]-dithiol</text>
        <dbReference type="Rhea" id="RHEA:21976"/>
        <dbReference type="Rhea" id="RHEA-COMP:10698"/>
        <dbReference type="Rhea" id="RHEA-COMP:10700"/>
        <dbReference type="ChEBI" id="CHEBI:15378"/>
        <dbReference type="ChEBI" id="CHEBI:17359"/>
        <dbReference type="ChEBI" id="CHEBI:29950"/>
        <dbReference type="ChEBI" id="CHEBI:50058"/>
        <dbReference type="ChEBI" id="CHEBI:58243"/>
        <dbReference type="ChEBI" id="CHEBI:456215"/>
        <dbReference type="EC" id="1.8.4.10"/>
    </reaction>
</comment>
<comment type="cofactor">
    <cofactor evidence="1">
        <name>[4Fe-4S] cluster</name>
        <dbReference type="ChEBI" id="CHEBI:49883"/>
    </cofactor>
    <text evidence="1">Binds 1 [4Fe-4S] cluster per subunit.</text>
</comment>
<comment type="pathway">
    <text evidence="1">Sulfur metabolism; hydrogen sulfide biosynthesis; sulfite from sulfate.</text>
</comment>
<comment type="subcellular location">
    <subcellularLocation>
        <location evidence="1">Cytoplasm</location>
    </subcellularLocation>
</comment>
<comment type="similarity">
    <text evidence="1">Belongs to the PAPS reductase family. CysH subfamily.</text>
</comment>
<name>CYSH_NEIMA</name>
<accession>Q9JUD5</accession>
<accession>A1IRZ1</accession>
<reference key="1">
    <citation type="journal article" date="2000" name="Nature">
        <title>Complete DNA sequence of a serogroup A strain of Neisseria meningitidis Z2491.</title>
        <authorList>
            <person name="Parkhill J."/>
            <person name="Achtman M."/>
            <person name="James K.D."/>
            <person name="Bentley S.D."/>
            <person name="Churcher C.M."/>
            <person name="Klee S.R."/>
            <person name="Morelli G."/>
            <person name="Basham D."/>
            <person name="Brown D."/>
            <person name="Chillingworth T."/>
            <person name="Davies R.M."/>
            <person name="Davis P."/>
            <person name="Devlin K."/>
            <person name="Feltwell T."/>
            <person name="Hamlin N."/>
            <person name="Holroyd S."/>
            <person name="Jagels K."/>
            <person name="Leather S."/>
            <person name="Moule S."/>
            <person name="Mungall K.L."/>
            <person name="Quail M.A."/>
            <person name="Rajandream M.A."/>
            <person name="Rutherford K.M."/>
            <person name="Simmonds M."/>
            <person name="Skelton J."/>
            <person name="Whitehead S."/>
            <person name="Spratt B.G."/>
            <person name="Barrell B.G."/>
        </authorList>
    </citation>
    <scope>NUCLEOTIDE SEQUENCE [LARGE SCALE GENOMIC DNA]</scope>
    <source>
        <strain>DSM 15465 / Z2491</strain>
    </source>
</reference>
<evidence type="ECO:0000255" key="1">
    <source>
        <dbReference type="HAMAP-Rule" id="MF_00063"/>
    </source>
</evidence>
<organism>
    <name type="scientific">Neisseria meningitidis serogroup A / serotype 4A (strain DSM 15465 / Z2491)</name>
    <dbReference type="NCBI Taxonomy" id="122587"/>
    <lineage>
        <taxon>Bacteria</taxon>
        <taxon>Pseudomonadati</taxon>
        <taxon>Pseudomonadota</taxon>
        <taxon>Betaproteobacteria</taxon>
        <taxon>Neisseriales</taxon>
        <taxon>Neisseriaceae</taxon>
        <taxon>Neisseria</taxon>
    </lineage>
</organism>
<gene>
    <name evidence="1" type="primary">cysH</name>
    <name type="ordered locus">NMA1366</name>
</gene>
<proteinExistence type="inferred from homology"/>
<protein>
    <recommendedName>
        <fullName evidence="1">Adenosine 5'-phosphosulfate reductase</fullName>
        <shortName evidence="1">APS reductase</shortName>
        <ecNumber evidence="1">1.8.4.10</ecNumber>
    </recommendedName>
    <alternativeName>
        <fullName evidence="1">5'-adenylylsulfate reductase</fullName>
    </alternativeName>
    <alternativeName>
        <fullName evidence="1">Thioredoxin-dependent 5'-adenylylsulfate reductase</fullName>
    </alternativeName>
</protein>
<feature type="chain" id="PRO_0000100635" description="Adenosine 5'-phosphosulfate reductase">
    <location>
        <begin position="1"/>
        <end position="244"/>
    </location>
</feature>
<feature type="active site" description="Nucleophile; cysteine thiosulfonate intermediate" evidence="1">
    <location>
        <position position="240"/>
    </location>
</feature>
<feature type="binding site" evidence="1">
    <location>
        <position position="129"/>
    </location>
    <ligand>
        <name>[4Fe-4S] cluster</name>
        <dbReference type="ChEBI" id="CHEBI:49883"/>
    </ligand>
</feature>
<feature type="binding site" evidence="1">
    <location>
        <position position="130"/>
    </location>
    <ligand>
        <name>[4Fe-4S] cluster</name>
        <dbReference type="ChEBI" id="CHEBI:49883"/>
    </ligand>
</feature>
<feature type="binding site" evidence="1">
    <location>
        <position position="212"/>
    </location>
    <ligand>
        <name>[4Fe-4S] cluster</name>
        <dbReference type="ChEBI" id="CHEBI:49883"/>
    </ligand>
</feature>
<feature type="binding site" evidence="1">
    <location>
        <position position="215"/>
    </location>
    <ligand>
        <name>[4Fe-4S] cluster</name>
        <dbReference type="ChEBI" id="CHEBI:49883"/>
    </ligand>
</feature>
<sequence length="244" mass="28063">MKIFKPALWKIPPIENGSETALAEKTETLKQRLHRIAGSHRDARFASSLAAEDMVITDLIAGENLNIGIFTLDTGLLHAETLNLLDRIERVYPHMQIKRFQPIREDALHYVESKGRFAFYDSVEARRECCRIRKTEPLDRAIAGADAWLTGQRREQSATRTELPFAEYDAGRGIDKYNPIFDWSEHDVWAYILANNVPYNDLYRQGFPSIGCDPCTRPVKAGEDIRAGRWWWEDKNSKECGLHK</sequence>
<keyword id="KW-0963">Cytoplasm</keyword>
<keyword id="KW-0408">Iron</keyword>
<keyword id="KW-0411">Iron-sulfur</keyword>
<keyword id="KW-0479">Metal-binding</keyword>
<keyword id="KW-0560">Oxidoreductase</keyword>
<dbReference type="EC" id="1.8.4.10" evidence="1"/>
<dbReference type="EMBL" id="AL157959">
    <property type="protein sequence ID" value="CAM08539.1"/>
    <property type="molecule type" value="Genomic_DNA"/>
</dbReference>
<dbReference type="PIR" id="H81905">
    <property type="entry name" value="H81905"/>
</dbReference>
<dbReference type="RefSeq" id="WP_002217188.1">
    <property type="nucleotide sequence ID" value="NC_003116.1"/>
</dbReference>
<dbReference type="SMR" id="Q9JUD5"/>
<dbReference type="EnsemblBacteria" id="CAM08539">
    <property type="protein sequence ID" value="CAM08539"/>
    <property type="gene ID" value="NMA1366"/>
</dbReference>
<dbReference type="KEGG" id="nma:NMA1366"/>
<dbReference type="HOGENOM" id="CLU_044089_1_0_4"/>
<dbReference type="Proteomes" id="UP000000626">
    <property type="component" value="Chromosome"/>
</dbReference>
<dbReference type="GO" id="GO:0005737">
    <property type="term" value="C:cytoplasm"/>
    <property type="evidence" value="ECO:0007669"/>
    <property type="project" value="UniProtKB-SubCell"/>
</dbReference>
<dbReference type="GO" id="GO:0051539">
    <property type="term" value="F:4 iron, 4 sulfur cluster binding"/>
    <property type="evidence" value="ECO:0007669"/>
    <property type="project" value="UniProtKB-UniRule"/>
</dbReference>
<dbReference type="GO" id="GO:0043866">
    <property type="term" value="F:adenylyl-sulfate reductase (thioredoxin) activity"/>
    <property type="evidence" value="ECO:0007669"/>
    <property type="project" value="UniProtKB-EC"/>
</dbReference>
<dbReference type="GO" id="GO:0046872">
    <property type="term" value="F:metal ion binding"/>
    <property type="evidence" value="ECO:0007669"/>
    <property type="project" value="UniProtKB-KW"/>
</dbReference>
<dbReference type="GO" id="GO:0004604">
    <property type="term" value="F:phosphoadenylyl-sulfate reductase (thioredoxin) activity"/>
    <property type="evidence" value="ECO:0007669"/>
    <property type="project" value="UniProtKB-UniRule"/>
</dbReference>
<dbReference type="GO" id="GO:0019344">
    <property type="term" value="P:cysteine biosynthetic process"/>
    <property type="evidence" value="ECO:0007669"/>
    <property type="project" value="InterPro"/>
</dbReference>
<dbReference type="GO" id="GO:0070814">
    <property type="term" value="P:hydrogen sulfide biosynthetic process"/>
    <property type="evidence" value="ECO:0007669"/>
    <property type="project" value="UniProtKB-UniRule"/>
</dbReference>
<dbReference type="GO" id="GO:0019379">
    <property type="term" value="P:sulfate assimilation, phosphoadenylyl sulfate reduction by phosphoadenylyl-sulfate reductase (thioredoxin)"/>
    <property type="evidence" value="ECO:0007669"/>
    <property type="project" value="UniProtKB-UniRule"/>
</dbReference>
<dbReference type="CDD" id="cd23945">
    <property type="entry name" value="PAPS_reductase"/>
    <property type="match status" value="1"/>
</dbReference>
<dbReference type="Gene3D" id="3.40.50.620">
    <property type="entry name" value="HUPs"/>
    <property type="match status" value="1"/>
</dbReference>
<dbReference type="HAMAP" id="MF_00063">
    <property type="entry name" value="CysH"/>
    <property type="match status" value="1"/>
</dbReference>
<dbReference type="InterPro" id="IPR011798">
    <property type="entry name" value="APS_reductase"/>
</dbReference>
<dbReference type="InterPro" id="IPR004511">
    <property type="entry name" value="PAPS/APS_Rdtase"/>
</dbReference>
<dbReference type="InterPro" id="IPR002500">
    <property type="entry name" value="PAPS_reduct_dom"/>
</dbReference>
<dbReference type="InterPro" id="IPR014729">
    <property type="entry name" value="Rossmann-like_a/b/a_fold"/>
</dbReference>
<dbReference type="NCBIfam" id="TIGR02055">
    <property type="entry name" value="APS_reductase"/>
    <property type="match status" value="1"/>
</dbReference>
<dbReference type="NCBIfam" id="NF002537">
    <property type="entry name" value="PRK02090.1"/>
    <property type="match status" value="1"/>
</dbReference>
<dbReference type="PANTHER" id="PTHR46482:SF9">
    <property type="entry name" value="5'-ADENYLYLSULFATE REDUCTASE 1, CHLOROPLASTIC"/>
    <property type="match status" value="1"/>
</dbReference>
<dbReference type="PANTHER" id="PTHR46482">
    <property type="entry name" value="5'-ADENYLYLSULFATE REDUCTASE 3, CHLOROPLASTIC"/>
    <property type="match status" value="1"/>
</dbReference>
<dbReference type="Pfam" id="PF01507">
    <property type="entry name" value="PAPS_reduct"/>
    <property type="match status" value="1"/>
</dbReference>
<dbReference type="PIRSF" id="PIRSF000857">
    <property type="entry name" value="PAPS_reductase"/>
    <property type="match status" value="1"/>
</dbReference>
<dbReference type="SUPFAM" id="SSF52402">
    <property type="entry name" value="Adenine nucleotide alpha hydrolases-like"/>
    <property type="match status" value="1"/>
</dbReference>